<reference key="1">
    <citation type="journal article" date="2000" name="Nature">
        <title>Complete DNA sequence of a serogroup A strain of Neisseria meningitidis Z2491.</title>
        <authorList>
            <person name="Parkhill J."/>
            <person name="Achtman M."/>
            <person name="James K.D."/>
            <person name="Bentley S.D."/>
            <person name="Churcher C.M."/>
            <person name="Klee S.R."/>
            <person name="Morelli G."/>
            <person name="Basham D."/>
            <person name="Brown D."/>
            <person name="Chillingworth T."/>
            <person name="Davies R.M."/>
            <person name="Davis P."/>
            <person name="Devlin K."/>
            <person name="Feltwell T."/>
            <person name="Hamlin N."/>
            <person name="Holroyd S."/>
            <person name="Jagels K."/>
            <person name="Leather S."/>
            <person name="Moule S."/>
            <person name="Mungall K.L."/>
            <person name="Quail M.A."/>
            <person name="Rajandream M.A."/>
            <person name="Rutherford K.M."/>
            <person name="Simmonds M."/>
            <person name="Skelton J."/>
            <person name="Whitehead S."/>
            <person name="Spratt B.G."/>
            <person name="Barrell B.G."/>
        </authorList>
    </citation>
    <scope>NUCLEOTIDE SEQUENCE [LARGE SCALE GENOMIC DNA]</scope>
    <source>
        <strain>DSM 15465 / Z2491</strain>
    </source>
</reference>
<accession>P65914</accession>
<accession>A1IQ26</accession>
<accession>Q9JR25</accession>
<comment type="function">
    <text evidence="1">Catalyzes the transfer of a ribosyl phosphate group from 5-phosphoribose 1-diphosphate to orotate, leading to the formation of orotidine monophosphate (OMP).</text>
</comment>
<comment type="catalytic activity">
    <reaction evidence="1">
        <text>orotidine 5'-phosphate + diphosphate = orotate + 5-phospho-alpha-D-ribose 1-diphosphate</text>
        <dbReference type="Rhea" id="RHEA:10380"/>
        <dbReference type="ChEBI" id="CHEBI:30839"/>
        <dbReference type="ChEBI" id="CHEBI:33019"/>
        <dbReference type="ChEBI" id="CHEBI:57538"/>
        <dbReference type="ChEBI" id="CHEBI:58017"/>
        <dbReference type="EC" id="2.4.2.10"/>
    </reaction>
</comment>
<comment type="cofactor">
    <cofactor evidence="1">
        <name>Mg(2+)</name>
        <dbReference type="ChEBI" id="CHEBI:18420"/>
    </cofactor>
</comment>
<comment type="pathway">
    <text evidence="1">Pyrimidine metabolism; UMP biosynthesis via de novo pathway; UMP from orotate: step 1/2.</text>
</comment>
<comment type="subunit">
    <text evidence="1">Homodimer.</text>
</comment>
<comment type="similarity">
    <text evidence="1">Belongs to the purine/pyrimidine phosphoribosyltransferase family. PyrE subfamily.</text>
</comment>
<proteinExistence type="inferred from homology"/>
<feature type="chain" id="PRO_0000110714" description="Orotate phosphoribosyltransferase">
    <location>
        <begin position="1"/>
        <end position="213"/>
    </location>
</feature>
<feature type="binding site" description="in other chain" evidence="1">
    <location>
        <position position="26"/>
    </location>
    <ligand>
        <name>5-phospho-alpha-D-ribose 1-diphosphate</name>
        <dbReference type="ChEBI" id="CHEBI:58017"/>
        <note>ligand shared between dimeric partners</note>
    </ligand>
</feature>
<feature type="binding site" evidence="1">
    <location>
        <begin position="34"/>
        <end position="35"/>
    </location>
    <ligand>
        <name>orotate</name>
        <dbReference type="ChEBI" id="CHEBI:30839"/>
    </ligand>
</feature>
<feature type="binding site" description="in other chain" evidence="1">
    <location>
        <begin position="72"/>
        <end position="73"/>
    </location>
    <ligand>
        <name>5-phospho-alpha-D-ribose 1-diphosphate</name>
        <dbReference type="ChEBI" id="CHEBI:58017"/>
        <note>ligand shared between dimeric partners</note>
    </ligand>
</feature>
<feature type="binding site" evidence="1">
    <location>
        <position position="98"/>
    </location>
    <ligand>
        <name>5-phospho-alpha-D-ribose 1-diphosphate</name>
        <dbReference type="ChEBI" id="CHEBI:58017"/>
        <note>ligand shared between dimeric partners</note>
    </ligand>
</feature>
<feature type="binding site" description="in other chain" evidence="1">
    <location>
        <position position="99"/>
    </location>
    <ligand>
        <name>5-phospho-alpha-D-ribose 1-diphosphate</name>
        <dbReference type="ChEBI" id="CHEBI:58017"/>
        <note>ligand shared between dimeric partners</note>
    </ligand>
</feature>
<feature type="binding site" evidence="1">
    <location>
        <position position="102"/>
    </location>
    <ligand>
        <name>5-phospho-alpha-D-ribose 1-diphosphate</name>
        <dbReference type="ChEBI" id="CHEBI:58017"/>
        <note>ligand shared between dimeric partners</note>
    </ligand>
</feature>
<feature type="binding site" evidence="1">
    <location>
        <position position="104"/>
    </location>
    <ligand>
        <name>5-phospho-alpha-D-ribose 1-diphosphate</name>
        <dbReference type="ChEBI" id="CHEBI:58017"/>
        <note>ligand shared between dimeric partners</note>
    </ligand>
</feature>
<feature type="binding site" description="in other chain" evidence="1">
    <location>
        <begin position="123"/>
        <end position="131"/>
    </location>
    <ligand>
        <name>5-phospho-alpha-D-ribose 1-diphosphate</name>
        <dbReference type="ChEBI" id="CHEBI:58017"/>
        <note>ligand shared between dimeric partners</note>
    </ligand>
</feature>
<feature type="binding site" evidence="1">
    <location>
        <position position="127"/>
    </location>
    <ligand>
        <name>orotate</name>
        <dbReference type="ChEBI" id="CHEBI:30839"/>
    </ligand>
</feature>
<feature type="binding site" evidence="1">
    <location>
        <position position="155"/>
    </location>
    <ligand>
        <name>orotate</name>
        <dbReference type="ChEBI" id="CHEBI:30839"/>
    </ligand>
</feature>
<name>PYRE_NEIMA</name>
<evidence type="ECO:0000255" key="1">
    <source>
        <dbReference type="HAMAP-Rule" id="MF_01208"/>
    </source>
</evidence>
<organism>
    <name type="scientific">Neisseria meningitidis serogroup A / serotype 4A (strain DSM 15465 / Z2491)</name>
    <dbReference type="NCBI Taxonomy" id="122587"/>
    <lineage>
        <taxon>Bacteria</taxon>
        <taxon>Pseudomonadati</taxon>
        <taxon>Pseudomonadota</taxon>
        <taxon>Betaproteobacteria</taxon>
        <taxon>Neisseriales</taxon>
        <taxon>Neisseriaceae</taxon>
        <taxon>Neisseria</taxon>
    </lineage>
</organism>
<gene>
    <name evidence="1" type="primary">pyrE</name>
    <name type="ordered locus">NMA0582</name>
</gene>
<protein>
    <recommendedName>
        <fullName evidence="1">Orotate phosphoribosyltransferase</fullName>
        <shortName evidence="1">OPRT</shortName>
        <shortName evidence="1">OPRTase</shortName>
        <ecNumber evidence="1">2.4.2.10</ecNumber>
    </recommendedName>
</protein>
<dbReference type="EC" id="2.4.2.10" evidence="1"/>
<dbReference type="EMBL" id="AL157959">
    <property type="protein sequence ID" value="CAM07852.1"/>
    <property type="molecule type" value="Genomic_DNA"/>
</dbReference>
<dbReference type="RefSeq" id="WP_002217982.1">
    <property type="nucleotide sequence ID" value="NC_003116.1"/>
</dbReference>
<dbReference type="SMR" id="P65914"/>
<dbReference type="EnsemblBacteria" id="CAM07852">
    <property type="protein sequence ID" value="CAM07852"/>
    <property type="gene ID" value="NMA0582"/>
</dbReference>
<dbReference type="GeneID" id="93386781"/>
<dbReference type="KEGG" id="nma:NMA0582"/>
<dbReference type="HOGENOM" id="CLU_074878_0_1_4"/>
<dbReference type="UniPathway" id="UPA00070">
    <property type="reaction ID" value="UER00119"/>
</dbReference>
<dbReference type="Proteomes" id="UP000000626">
    <property type="component" value="Chromosome"/>
</dbReference>
<dbReference type="GO" id="GO:0005737">
    <property type="term" value="C:cytoplasm"/>
    <property type="evidence" value="ECO:0007669"/>
    <property type="project" value="TreeGrafter"/>
</dbReference>
<dbReference type="GO" id="GO:0000287">
    <property type="term" value="F:magnesium ion binding"/>
    <property type="evidence" value="ECO:0007669"/>
    <property type="project" value="UniProtKB-UniRule"/>
</dbReference>
<dbReference type="GO" id="GO:0004588">
    <property type="term" value="F:orotate phosphoribosyltransferase activity"/>
    <property type="evidence" value="ECO:0007669"/>
    <property type="project" value="UniProtKB-UniRule"/>
</dbReference>
<dbReference type="GO" id="GO:0006207">
    <property type="term" value="P:'de novo' pyrimidine nucleobase biosynthetic process"/>
    <property type="evidence" value="ECO:0007669"/>
    <property type="project" value="TreeGrafter"/>
</dbReference>
<dbReference type="GO" id="GO:0044205">
    <property type="term" value="P:'de novo' UMP biosynthetic process"/>
    <property type="evidence" value="ECO:0007669"/>
    <property type="project" value="UniProtKB-UniRule"/>
</dbReference>
<dbReference type="GO" id="GO:0046132">
    <property type="term" value="P:pyrimidine ribonucleoside biosynthetic process"/>
    <property type="evidence" value="ECO:0007669"/>
    <property type="project" value="TreeGrafter"/>
</dbReference>
<dbReference type="CDD" id="cd06223">
    <property type="entry name" value="PRTases_typeI"/>
    <property type="match status" value="1"/>
</dbReference>
<dbReference type="FunFam" id="3.40.50.2020:FF:000008">
    <property type="entry name" value="Orotate phosphoribosyltransferase"/>
    <property type="match status" value="1"/>
</dbReference>
<dbReference type="Gene3D" id="3.40.50.2020">
    <property type="match status" value="1"/>
</dbReference>
<dbReference type="HAMAP" id="MF_01208">
    <property type="entry name" value="PyrE"/>
    <property type="match status" value="1"/>
</dbReference>
<dbReference type="InterPro" id="IPR023031">
    <property type="entry name" value="OPRT"/>
</dbReference>
<dbReference type="InterPro" id="IPR004467">
    <property type="entry name" value="Or_phspho_trans_dom"/>
</dbReference>
<dbReference type="InterPro" id="IPR000836">
    <property type="entry name" value="PRibTrfase_dom"/>
</dbReference>
<dbReference type="InterPro" id="IPR029057">
    <property type="entry name" value="PRTase-like"/>
</dbReference>
<dbReference type="NCBIfam" id="TIGR00336">
    <property type="entry name" value="pyrE"/>
    <property type="match status" value="1"/>
</dbReference>
<dbReference type="PANTHER" id="PTHR46683">
    <property type="entry name" value="OROTATE PHOSPHORIBOSYLTRANSFERASE 1-RELATED"/>
    <property type="match status" value="1"/>
</dbReference>
<dbReference type="PANTHER" id="PTHR46683:SF1">
    <property type="entry name" value="OROTATE PHOSPHORIBOSYLTRANSFERASE 1-RELATED"/>
    <property type="match status" value="1"/>
</dbReference>
<dbReference type="Pfam" id="PF00156">
    <property type="entry name" value="Pribosyltran"/>
    <property type="match status" value="1"/>
</dbReference>
<dbReference type="SUPFAM" id="SSF53271">
    <property type="entry name" value="PRTase-like"/>
    <property type="match status" value="1"/>
</dbReference>
<dbReference type="PROSITE" id="PS00103">
    <property type="entry name" value="PUR_PYR_PR_TRANSFER"/>
    <property type="match status" value="1"/>
</dbReference>
<keyword id="KW-0328">Glycosyltransferase</keyword>
<keyword id="KW-0460">Magnesium</keyword>
<keyword id="KW-0665">Pyrimidine biosynthesis</keyword>
<keyword id="KW-0808">Transferase</keyword>
<sequence>MTDFRQDFLKFSLAQNVLKFGEFTTKAGRRSPYFFNAGLFNDGLSTLQLAKFYAQSIIESGIRFDMLFGPAYKGIILAAATAMMLAEKGVNVPFAYNRKEAKDHGEGGVLVGAPLKGRVLIIDDVISAGTSVRESIKLIEAEGATPAGVAIALDRMEKGTGELSAVQEVEKQYGLPVAPIASLNDLFILLQNNPEFGQFLEPVRAYRRQYGVE</sequence>